<name>5GT1_PERFR</name>
<feature type="signal peptide" evidence="3">
    <location>
        <begin position="1"/>
        <end position="22"/>
    </location>
</feature>
<feature type="chain" id="PRO_0000422564" description="Anthocyanidin 3-O-glucoside 5-O-glucosyltransferase 1">
    <location>
        <begin position="23"/>
        <end position="460"/>
    </location>
</feature>
<feature type="active site" description="Proton acceptor" evidence="1">
    <location>
        <position position="16"/>
    </location>
</feature>
<feature type="binding site" evidence="2">
    <location>
        <position position="16"/>
    </location>
    <ligand>
        <name>an anthocyanidin</name>
        <dbReference type="ChEBI" id="CHEBI:143576"/>
    </ligand>
</feature>
<feature type="binding site" evidence="1">
    <location>
        <position position="338"/>
    </location>
    <ligand>
        <name>UDP-alpha-D-glucose</name>
        <dbReference type="ChEBI" id="CHEBI:58885"/>
    </ligand>
</feature>
<feature type="binding site" evidence="1">
    <location>
        <position position="353"/>
    </location>
    <ligand>
        <name>UDP-alpha-D-glucose</name>
        <dbReference type="ChEBI" id="CHEBI:58885"/>
    </ligand>
</feature>
<feature type="binding site" evidence="1">
    <location>
        <position position="356"/>
    </location>
    <ligand>
        <name>UDP-alpha-D-glucose</name>
        <dbReference type="ChEBI" id="CHEBI:58885"/>
    </ligand>
</feature>
<feature type="binding site" evidence="1">
    <location>
        <position position="357"/>
    </location>
    <ligand>
        <name>UDP-alpha-D-glucose</name>
        <dbReference type="ChEBI" id="CHEBI:58885"/>
    </ligand>
</feature>
<feature type="binding site" evidence="1">
    <location>
        <position position="358"/>
    </location>
    <ligand>
        <name>UDP-alpha-D-glucose</name>
        <dbReference type="ChEBI" id="CHEBI:58885"/>
    </ligand>
</feature>
<feature type="binding site" evidence="1">
    <location>
        <position position="361"/>
    </location>
    <ligand>
        <name>UDP-alpha-D-glucose</name>
        <dbReference type="ChEBI" id="CHEBI:58885"/>
    </ligand>
</feature>
<feature type="binding site" evidence="1">
    <location>
        <position position="377"/>
    </location>
    <ligand>
        <name>UDP-alpha-D-glucose</name>
        <dbReference type="ChEBI" id="CHEBI:58885"/>
    </ligand>
</feature>
<feature type="binding site" evidence="1">
    <location>
        <position position="378"/>
    </location>
    <ligand>
        <name>UDP-alpha-D-glucose</name>
        <dbReference type="ChEBI" id="CHEBI:58885"/>
    </ligand>
</feature>
<dbReference type="EC" id="2.4.1.298"/>
<dbReference type="EMBL" id="AB013596">
    <property type="protein sequence ID" value="BAA36421.1"/>
    <property type="molecule type" value="mRNA"/>
</dbReference>
<dbReference type="SMR" id="Q9ZR27"/>
<dbReference type="CAZy" id="GT1">
    <property type="family name" value="Glycosyltransferase Family 1"/>
</dbReference>
<dbReference type="KEGG" id="ag:BAA36421"/>
<dbReference type="BRENDA" id="2.4.1.298">
    <property type="organism ID" value="4681"/>
</dbReference>
<dbReference type="SABIO-RK" id="Q9ZR27"/>
<dbReference type="UniPathway" id="UPA00009"/>
<dbReference type="GO" id="GO:0016758">
    <property type="term" value="F:hexosyltransferase activity"/>
    <property type="evidence" value="ECO:0000314"/>
    <property type="project" value="UniProtKB"/>
</dbReference>
<dbReference type="GO" id="GO:0080043">
    <property type="term" value="F:quercetin 3-O-glucosyltransferase activity"/>
    <property type="evidence" value="ECO:0007669"/>
    <property type="project" value="TreeGrafter"/>
</dbReference>
<dbReference type="GO" id="GO:0080044">
    <property type="term" value="F:quercetin 7-O-glucosyltransferase activity"/>
    <property type="evidence" value="ECO:0007669"/>
    <property type="project" value="TreeGrafter"/>
</dbReference>
<dbReference type="GO" id="GO:0102816">
    <property type="term" value="F:UDP-D-glucose:delphinidin 3-O-glucosyl-5-O-caffeoylglucoside -O-beta-D-glucosyltransferase activity"/>
    <property type="evidence" value="ECO:0007669"/>
    <property type="project" value="UniProtKB-EC"/>
</dbReference>
<dbReference type="GO" id="GO:0009718">
    <property type="term" value="P:anthocyanin-containing compound biosynthetic process"/>
    <property type="evidence" value="ECO:0000314"/>
    <property type="project" value="UniProtKB"/>
</dbReference>
<dbReference type="GO" id="GO:0043473">
    <property type="term" value="P:pigmentation"/>
    <property type="evidence" value="ECO:0000304"/>
    <property type="project" value="UniProtKB"/>
</dbReference>
<dbReference type="CDD" id="cd03784">
    <property type="entry name" value="GT1_Gtf-like"/>
    <property type="match status" value="1"/>
</dbReference>
<dbReference type="FunFam" id="3.40.50.2000:FF:000019">
    <property type="entry name" value="Glycosyltransferase"/>
    <property type="match status" value="1"/>
</dbReference>
<dbReference type="Gene3D" id="3.40.50.2000">
    <property type="entry name" value="Glycogen Phosphorylase B"/>
    <property type="match status" value="2"/>
</dbReference>
<dbReference type="InterPro" id="IPR002213">
    <property type="entry name" value="UDP_glucos_trans"/>
</dbReference>
<dbReference type="InterPro" id="IPR035595">
    <property type="entry name" value="UDP_glycos_trans_CS"/>
</dbReference>
<dbReference type="PANTHER" id="PTHR11926">
    <property type="entry name" value="GLUCOSYL/GLUCURONOSYL TRANSFERASES"/>
    <property type="match status" value="1"/>
</dbReference>
<dbReference type="PANTHER" id="PTHR11926:SF870">
    <property type="entry name" value="UDP-GLYCOSYLTRANSFERASE 75B1"/>
    <property type="match status" value="1"/>
</dbReference>
<dbReference type="Pfam" id="PF00201">
    <property type="entry name" value="UDPGT"/>
    <property type="match status" value="1"/>
</dbReference>
<dbReference type="SUPFAM" id="SSF53756">
    <property type="entry name" value="UDP-Glycosyltransferase/glycogen phosphorylase"/>
    <property type="match status" value="1"/>
</dbReference>
<dbReference type="PROSITE" id="PS00375">
    <property type="entry name" value="UDPGT"/>
    <property type="match status" value="1"/>
</dbReference>
<comment type="function">
    <text evidence="4">Catalyzes the glucosylation at the O-5 position of anthocyanidin 3-glucosides to form anthocyanidin 3,5-di-O-glucosides using UDP-glucose as sugar donor. Anthocyanidin 3,5-di-O-glucosides are molecules that are responsible for pigmentation. Also acts on anthocyanidin 3-O-(6-O-malonylglucoside). Much less active with hydroxycinnamoylglucose derivatives. No activity in the absence of the 3-O-glucoside group.</text>
</comment>
<comment type="catalytic activity">
    <reaction evidence="4">
        <text>an anthocyanidin 3-O-beta-D-glucoside + UDP-alpha-D-glucose = an anthocyanidin 3,5-di-O-beta-D-glucoside + UDP + 2 H(+)</text>
        <dbReference type="Rhea" id="RHEA:35423"/>
        <dbReference type="ChEBI" id="CHEBI:15378"/>
        <dbReference type="ChEBI" id="CHEBI:16307"/>
        <dbReference type="ChEBI" id="CHEBI:57503"/>
        <dbReference type="ChEBI" id="CHEBI:58223"/>
        <dbReference type="ChEBI" id="CHEBI:58885"/>
        <dbReference type="EC" id="2.4.1.298"/>
    </reaction>
</comment>
<comment type="biophysicochemical properties">
    <kinetics>
        <KM evidence="4">31.4 mM for 3-O-glucoside</KM>
        <KM evidence="4">940 mM for UDP-glucose</KM>
    </kinetics>
    <phDependence>
        <text evidence="4">Optimum pH is 8.0-8.5.</text>
    </phDependence>
</comment>
<comment type="pathway">
    <text evidence="4">Pigment biosynthesis; anthocyanin biosynthesis.</text>
</comment>
<comment type="similarity">
    <text evidence="5">Belongs to the UDP-glycosyltransferase family.</text>
</comment>
<keyword id="KW-0328">Glycosyltransferase</keyword>
<keyword id="KW-0732">Signal</keyword>
<keyword id="KW-0808">Transferase</keyword>
<evidence type="ECO:0000250" key="1">
    <source>
        <dbReference type="UniProtKB" id="A0A0A1HA03"/>
    </source>
</evidence>
<evidence type="ECO:0000250" key="2">
    <source>
        <dbReference type="UniProtKB" id="P51094"/>
    </source>
</evidence>
<evidence type="ECO:0000255" key="3"/>
<evidence type="ECO:0000269" key="4">
    <source>
    </source>
</evidence>
<evidence type="ECO:0000305" key="5"/>
<sequence length="460" mass="50974">MVRRRVLLATFPAQGHINPALQFAKRLLKAGTDVTFFTSVYAWRRMANTASAAAGNPPGLDFVAFSDGYDDGLKPCGDGKRYMSEMKARGSEALRNLLLNNHDVTFVVYSHLFAWAAEVARESQVPSALLWVEPATVLCIYYFYFNGYADEIDAGSDEIQLPRLPPLEQRSLPTFLLPETPERFRLMMKEKLETLDGEEKAKVLVNTFDALEPDALTAIDRYELIGIGPLIPSAFLDGGDPSETSYGGDLFEKSEENNCVEWLDTKPKSSVVYVSFGSVLRFPKAQMEEIGKGLLACGRPFLWMIREQKNDDGEEEEEELSCIGELKKMGKIVSWCSQLEVLAHPALGCFVTHCGWNSAVESLSCGVPVVAVPQWFDQTTNAKLIEDAWGTGVRVRMNEGGGVDGSEIERCVEMVMDGGEKSKLVRENAIKWKTLAREAMGEDGSSLKNLNAFLHQVARA</sequence>
<proteinExistence type="evidence at protein level"/>
<accession>Q9ZR27</accession>
<reference key="1">
    <citation type="journal article" date="1999" name="J. Biol. Chem.">
        <title>Molecular cloning and biochemical characterization of a novel anthocyanin 5-O-glucosyltransferase by mRNA differential display for plant forms regarding anthocyanin.</title>
        <authorList>
            <person name="Yamazaki M."/>
            <person name="Gong Z."/>
            <person name="Fukuchi-Mizutani M."/>
            <person name="Fukui Y."/>
            <person name="Tanaka Y."/>
            <person name="Kusumi T."/>
            <person name="Saito K."/>
        </authorList>
    </citation>
    <scope>NUCLEOTIDE SEQUENCE [MRNA]</scope>
    <scope>FUNCTION</scope>
    <scope>CATALYTIC ACTIVITY</scope>
    <scope>PATHWAY</scope>
    <scope>BIOPHYSICOCHEMICAL PROPERTIES</scope>
    <source>
        <tissue>Leaf</tissue>
    </source>
</reference>
<gene>
    <name type="primary">PF3R4</name>
</gene>
<organism>
    <name type="scientific">Perilla frutescens</name>
    <name type="common">Beefsteak mint</name>
    <name type="synonym">Perilla ocymoides</name>
    <dbReference type="NCBI Taxonomy" id="48386"/>
    <lineage>
        <taxon>Eukaryota</taxon>
        <taxon>Viridiplantae</taxon>
        <taxon>Streptophyta</taxon>
        <taxon>Embryophyta</taxon>
        <taxon>Tracheophyta</taxon>
        <taxon>Spermatophyta</taxon>
        <taxon>Magnoliopsida</taxon>
        <taxon>eudicotyledons</taxon>
        <taxon>Gunneridae</taxon>
        <taxon>Pentapetalae</taxon>
        <taxon>asterids</taxon>
        <taxon>lamiids</taxon>
        <taxon>Lamiales</taxon>
        <taxon>Lamiaceae</taxon>
        <taxon>Nepetoideae</taxon>
        <taxon>Elsholtzieae</taxon>
        <taxon>Perilla</taxon>
    </lineage>
</organism>
<protein>
    <recommendedName>
        <fullName>Anthocyanidin 3-O-glucoside 5-O-glucosyltransferase 1</fullName>
        <ecNumber>2.4.1.298</ecNumber>
    </recommendedName>
    <alternativeName>
        <fullName>UDP-glucose:anthocyanin 5-O-glucosyltransferase 3R4</fullName>
        <shortName>p3R4</shortName>
    </alternativeName>
</protein>